<gene>
    <name type="primary">smg5</name>
    <name evidence="1" type="synonym">est1b</name>
</gene>
<organism evidence="8">
    <name type="scientific">Danio rerio</name>
    <name type="common">Zebrafish</name>
    <name type="synonym">Brachydanio rerio</name>
    <dbReference type="NCBI Taxonomy" id="7955"/>
    <lineage>
        <taxon>Eukaryota</taxon>
        <taxon>Metazoa</taxon>
        <taxon>Chordata</taxon>
        <taxon>Craniata</taxon>
        <taxon>Vertebrata</taxon>
        <taxon>Euteleostomi</taxon>
        <taxon>Actinopterygii</taxon>
        <taxon>Neopterygii</taxon>
        <taxon>Teleostei</taxon>
        <taxon>Ostariophysi</taxon>
        <taxon>Cypriniformes</taxon>
        <taxon>Danionidae</taxon>
        <taxon>Danioninae</taxon>
        <taxon>Danio</taxon>
    </lineage>
</organism>
<evidence type="ECO:0000250" key="1">
    <source>
        <dbReference type="UniProtKB" id="Q9UPR3"/>
    </source>
</evidence>
<evidence type="ECO:0000255" key="2"/>
<evidence type="ECO:0000256" key="3">
    <source>
        <dbReference type="SAM" id="MobiDB-lite"/>
    </source>
</evidence>
<evidence type="ECO:0000269" key="4">
    <source>
    </source>
</evidence>
<evidence type="ECO:0000305" key="5"/>
<evidence type="ECO:0000312" key="6">
    <source>
        <dbReference type="EMBL" id="AAH96955.1"/>
    </source>
</evidence>
<evidence type="ECO:0000312" key="7">
    <source>
        <dbReference type="EMBL" id="CAX32465.1"/>
    </source>
</evidence>
<evidence type="ECO:0000312" key="8">
    <source>
        <dbReference type="Proteomes" id="UP000000437"/>
    </source>
</evidence>
<evidence type="ECO:0000312" key="9">
    <source>
        <dbReference type="ZFIN" id="ZDB-GENE-050913-144"/>
    </source>
</evidence>
<comment type="function">
    <text evidence="1 4">Plays a role in nonsense-mediated mRNA decay (By similarity). Does not have RNase activity by itself (By similarity). Promotes dephosphorylation of UPF1 (By similarity). Together with SMG7 is thought to provide a link to the mRNA degradation machinery involving exonucleolytic pathways, and to serve as an adapter for UPF1 to protein phosphatase 2A (PP2A), thereby triggering UPF1 dephosphorylation (By similarity). Necessary for TERT activity (By similarity). Required for normal embryonic development (PubMed:19414594).</text>
</comment>
<comment type="subcellular location">
    <subcellularLocation>
        <location evidence="1">Cytoplasm</location>
    </subcellularLocation>
    <subcellularLocation>
        <location evidence="1">Nucleus</location>
    </subcellularLocation>
</comment>
<comment type="alternative products">
    <event type="alternative splicing"/>
    <isoform>
        <id>F1R7R1-1</id>
        <name>1</name>
        <sequence type="displayed"/>
    </isoform>
    <isoform>
        <id>F1R7R1-2</id>
        <name>2</name>
        <sequence type="described" ref="VSP_061250"/>
    </isoform>
</comment>
<comment type="developmental stage">
    <text evidence="4">Expressed during early cleavage, gastrulation and at 1 day post-fertilization.</text>
</comment>
<comment type="disruption phenotype">
    <text evidence="4">Morpholino knockdown leads to phenotypes ranging in severity from weak to severe that are developmentally delayed with disturbed brain patterning, necrosis in areas of the brain, aberrant eye development, impaired somitogenesis resulting in stacked somites, perturbed yolk sac extension and posterior axis extension with a high mortality rate of 88% at 5 days post-fertilization.</text>
</comment>
<feature type="chain" id="PRO_0000454182" description="Nonsense-mediated mRNA decay factor SMG5">
    <location>
        <begin position="1"/>
        <end position="1099"/>
    </location>
</feature>
<feature type="domain" description="PINc" evidence="2">
    <location>
        <begin position="938"/>
        <end position="1061"/>
    </location>
</feature>
<feature type="region of interest" description="Disordered" evidence="3">
    <location>
        <begin position="403"/>
        <end position="631"/>
    </location>
</feature>
<feature type="region of interest" description="Disordered" evidence="3">
    <location>
        <begin position="663"/>
        <end position="722"/>
    </location>
</feature>
<feature type="compositionally biased region" description="Basic and acidic residues" evidence="3">
    <location>
        <begin position="419"/>
        <end position="434"/>
    </location>
</feature>
<feature type="compositionally biased region" description="Acidic residues" evidence="3">
    <location>
        <begin position="440"/>
        <end position="455"/>
    </location>
</feature>
<feature type="compositionally biased region" description="Basic and acidic residues" evidence="3">
    <location>
        <begin position="469"/>
        <end position="481"/>
    </location>
</feature>
<feature type="compositionally biased region" description="Basic residues" evidence="3">
    <location>
        <begin position="482"/>
        <end position="499"/>
    </location>
</feature>
<feature type="compositionally biased region" description="Acidic residues" evidence="3">
    <location>
        <begin position="504"/>
        <end position="523"/>
    </location>
</feature>
<feature type="compositionally biased region" description="Acidic residues" evidence="3">
    <location>
        <begin position="560"/>
        <end position="576"/>
    </location>
</feature>
<feature type="compositionally biased region" description="Polar residues" evidence="3">
    <location>
        <begin position="618"/>
        <end position="631"/>
    </location>
</feature>
<feature type="compositionally biased region" description="Polar residues" evidence="3">
    <location>
        <begin position="688"/>
        <end position="700"/>
    </location>
</feature>
<feature type="compositionally biased region" description="Basic and acidic residues" evidence="3">
    <location>
        <begin position="701"/>
        <end position="722"/>
    </location>
</feature>
<feature type="splice variant" id="VSP_061250" description="In isoform 2.">
    <original>IAHRR</original>
    <variation>VAHRC</variation>
    <location>
        <begin position="825"/>
        <end position="829"/>
    </location>
</feature>
<feature type="sequence conflict" description="In Ref. 1; CAX32465 and 3; AAH96955." evidence="5" ref="1 3">
    <original>S</original>
    <variation>L</variation>
    <location>
        <position position="673"/>
    </location>
</feature>
<feature type="sequence conflict" description="In Ref. 1; CAX32465 and 3; AAH96955." evidence="5" ref="1 3">
    <original>N</original>
    <variation>D</variation>
    <location>
        <position position="708"/>
    </location>
</feature>
<feature type="sequence conflict" description="In Ref. 1; CAX32465 and 3; AAH96955." evidence="5" ref="1 3">
    <original>M</original>
    <variation>V</variation>
    <location>
        <position position="815"/>
    </location>
</feature>
<feature type="sequence conflict" description="In Ref. 1; CAX32465 and 3; AAH96955." evidence="5" ref="1 3">
    <original>M</original>
    <variation>T</variation>
    <location>
        <position position="1031"/>
    </location>
</feature>
<dbReference type="EMBL" id="FM993108">
    <property type="protein sequence ID" value="CAX32465.1"/>
    <property type="molecule type" value="mRNA"/>
</dbReference>
<dbReference type="EMBL" id="CR848669">
    <property type="status" value="NOT_ANNOTATED_CDS"/>
    <property type="molecule type" value="Genomic_DNA"/>
</dbReference>
<dbReference type="EMBL" id="BC096955">
    <property type="protein sequence ID" value="AAH96955.1"/>
    <property type="molecule type" value="mRNA"/>
</dbReference>
<dbReference type="RefSeq" id="NP_001020094.1">
    <property type="nucleotide sequence ID" value="NM_001024923.1"/>
</dbReference>
<dbReference type="SMR" id="F1R7R1"/>
<dbReference type="FunCoup" id="F1R7R1">
    <property type="interactions" value="2724"/>
</dbReference>
<dbReference type="STRING" id="7955.ENSDARP00000060808"/>
<dbReference type="PaxDb" id="7955-ENSDARP00000060808"/>
<dbReference type="Ensembl" id="ENSDART00000060809">
    <molecule id="F1R7R1-1"/>
    <property type="protein sequence ID" value="ENSDARP00000060808"/>
    <property type="gene ID" value="ENSDARG00000041481"/>
</dbReference>
<dbReference type="GeneID" id="553261"/>
<dbReference type="KEGG" id="dre:553261"/>
<dbReference type="AGR" id="ZFIN:ZDB-GENE-050913-144"/>
<dbReference type="CTD" id="23381"/>
<dbReference type="ZFIN" id="ZDB-GENE-050913-144">
    <property type="gene designation" value="smg5"/>
</dbReference>
<dbReference type="eggNOG" id="KOG2162">
    <property type="taxonomic scope" value="Eukaryota"/>
</dbReference>
<dbReference type="HOGENOM" id="CLU_011872_0_0_1"/>
<dbReference type="InParanoid" id="F1R7R1"/>
<dbReference type="OMA" id="CLMSISR"/>
<dbReference type="OrthoDB" id="5920073at2759"/>
<dbReference type="PhylomeDB" id="F1R7R1"/>
<dbReference type="TreeFam" id="TF327119"/>
<dbReference type="Reactome" id="R-DRE-975957">
    <property type="pathway name" value="Nonsense Mediated Decay (NMD) enhanced by the Exon Junction Complex (EJC)"/>
</dbReference>
<dbReference type="PRO" id="PR:F1R7R1"/>
<dbReference type="Proteomes" id="UP000000437">
    <property type="component" value="Chromosome 16"/>
</dbReference>
<dbReference type="Bgee" id="ENSDARG00000041481">
    <property type="expression patterns" value="Expressed in mature ovarian follicle and 22 other cell types or tissues"/>
</dbReference>
<dbReference type="GO" id="GO:0005737">
    <property type="term" value="C:cytoplasm"/>
    <property type="evidence" value="ECO:0007669"/>
    <property type="project" value="UniProtKB-SubCell"/>
</dbReference>
<dbReference type="GO" id="GO:0005697">
    <property type="term" value="C:telomerase holoenzyme complex"/>
    <property type="evidence" value="ECO:0000318"/>
    <property type="project" value="GO_Central"/>
</dbReference>
<dbReference type="GO" id="GO:0070034">
    <property type="term" value="F:telomerase RNA binding"/>
    <property type="evidence" value="ECO:0000318"/>
    <property type="project" value="GO_Central"/>
</dbReference>
<dbReference type="GO" id="GO:0042162">
    <property type="term" value="F:telomeric DNA binding"/>
    <property type="evidence" value="ECO:0000318"/>
    <property type="project" value="GO_Central"/>
</dbReference>
<dbReference type="GO" id="GO:0043009">
    <property type="term" value="P:chordate embryonic development"/>
    <property type="evidence" value="ECO:0000315"/>
    <property type="project" value="ZFIN"/>
</dbReference>
<dbReference type="GO" id="GO:0000184">
    <property type="term" value="P:nuclear-transcribed mRNA catabolic process, nonsense-mediated decay"/>
    <property type="evidence" value="ECO:0000318"/>
    <property type="project" value="GO_Central"/>
</dbReference>
<dbReference type="CDD" id="cd09884">
    <property type="entry name" value="PIN_Smg5-like"/>
    <property type="match status" value="1"/>
</dbReference>
<dbReference type="FunFam" id="3.40.50.1010:FF:000017">
    <property type="entry name" value="protein SMG5 isoform X2"/>
    <property type="match status" value="1"/>
</dbReference>
<dbReference type="Gene3D" id="3.40.50.1010">
    <property type="entry name" value="5'-nuclease"/>
    <property type="match status" value="1"/>
</dbReference>
<dbReference type="Gene3D" id="1.25.40.10">
    <property type="entry name" value="Tetratricopeptide repeat domain"/>
    <property type="match status" value="1"/>
</dbReference>
<dbReference type="InterPro" id="IPR018834">
    <property type="entry name" value="DNA/RNA-bd_Est1-type"/>
</dbReference>
<dbReference type="InterPro" id="IPR019458">
    <property type="entry name" value="Est1-like_N"/>
</dbReference>
<dbReference type="InterPro" id="IPR045153">
    <property type="entry name" value="Est1/Ebs1-like"/>
</dbReference>
<dbReference type="InterPro" id="IPR002716">
    <property type="entry name" value="PIN_dom"/>
</dbReference>
<dbReference type="InterPro" id="IPR011990">
    <property type="entry name" value="TPR-like_helical_dom_sf"/>
</dbReference>
<dbReference type="PANTHER" id="PTHR15696:SF7">
    <property type="entry name" value="NONSENSE-MEDIATED MRNA DECAY FACTOR"/>
    <property type="match status" value="1"/>
</dbReference>
<dbReference type="PANTHER" id="PTHR15696">
    <property type="entry name" value="SMG-7 SUPPRESSOR WITH MORPHOLOGICAL EFFECT ON GENITALIA PROTEIN 7"/>
    <property type="match status" value="1"/>
</dbReference>
<dbReference type="Pfam" id="PF10374">
    <property type="entry name" value="EST1"/>
    <property type="match status" value="1"/>
</dbReference>
<dbReference type="Pfam" id="PF10373">
    <property type="entry name" value="EST1_DNA_bind"/>
    <property type="match status" value="1"/>
</dbReference>
<dbReference type="Pfam" id="PF13638">
    <property type="entry name" value="PIN_4"/>
    <property type="match status" value="1"/>
</dbReference>
<dbReference type="SMART" id="SM00670">
    <property type="entry name" value="PINc"/>
    <property type="match status" value="1"/>
</dbReference>
<dbReference type="SUPFAM" id="SSF48452">
    <property type="entry name" value="TPR-like"/>
    <property type="match status" value="1"/>
</dbReference>
<keyword id="KW-0025">Alternative splicing</keyword>
<keyword id="KW-0963">Cytoplasm</keyword>
<keyword id="KW-0866">Nonsense-mediated mRNA decay</keyword>
<keyword id="KW-0539">Nucleus</keyword>
<keyword id="KW-1185">Reference proteome</keyword>
<name>SMG5_DANRE</name>
<protein>
    <recommendedName>
        <fullName evidence="9">Nonsense-mediated mRNA decay factor SMG5</fullName>
    </recommendedName>
    <alternativeName>
        <fullName evidence="1">EST1-like protein B</fullName>
    </alternativeName>
    <alternativeName>
        <fullName evidence="1">SMG-5 homolog</fullName>
    </alternativeName>
</protein>
<proteinExistence type="evidence at transcript level"/>
<sequence>MSGPSQDSEPEAKVLHIKRLYRAVVETVHKLDIIISGKSSYREVFKPENISLRNKLRELCVKLMFLHPVDYGRKAEELLWRKVYYEVIQVIKTNKKHIHSRSALECAYRTHLIAGVGFFQHLLLYIQSHYQLELQDCIDWTHVTDPLIGRKKPVSATSKEMEWAQMACHRCLVYLGDLARYQNELAGVEAEQLAERFYHQALSVAPHVGMPFNQLGTLAGSKFYNVEATYYYLRCIQSETPFDGAYGNLKRLFDKASKMYHQVKKQEMKKLSPSRQRSKDIKRLLVSFMYLQSLLQPKNSLMETELTSLCQSVLEDFNLVLFYLPLPAHGSQSASEEEEEHDSVGSVLPDSLIFKMVVICLMVVHSLKRGASKQYSASIAFTLALFSHLVNHVNIRLQAELEEGESDVPALRTDNTDDADARDHSSAALSEERTLQNGSLEEDDDEEEEEKENGEDEPKGNGRTVATKKNQEKKRSAEEKQKQKRKFSRLSMLRRRRCAHKEDESDLSEGFESDEEEEEEEEGGGGGLVDGLGAPRVQMNSLGRDTRKGPLPEDGGWESGSEEDEGGTAFDVETDSDMNSQESRSDLEDMEDAENAPQQPQQEENEQPQTSREENATPPVTNGPSVSNDASISSNLQAMSSQLFQAKRCFRLAPTFSNVLLRPATTTPPAPESNPAPVQEITPPTGETPRNTSPEIANGTNDKDPDSNSEGSEHSNHSFHSEKTLSERLEILTNQGLIQVVKVFLDWLRTNTDIILMCAQSSQSLWNRLSVLLNLLPEGSKILETDIGLNKDVTELLSECEHPSLAQTLLLPEDMALRHLPALSIAHRRLDFTSQRPPLTPLDECVVRVCCIRSFGHFLTNLQGNVLHFNPEAGIFTSISQSEQDNLVQQAKAQFRMAEEEARRNRLMRDMAQLRLQLEVSQLEGSLQQPKAQSSMSPYLVPDTAVLCQHLGLLRQLAASGCFIIIIPRTVIDGLDMLKKENSGARDGIRFLETEFRKGNRYIRCQKESGRSFERDKLKRQDTEAWHLYKMVDSCRQLTGSQSSGDEDTAGMVTILTGHSLEELSERSASMKAAVQAVAAAGMELKNIIEFYRQWKEMG</sequence>
<reference evidence="7" key="1">
    <citation type="journal article" date="2009" name="Mol. Cell. Biol.">
        <title>Nonsense-mediated mRNA decay effectors are essential for zebrafish embryonic development and survival.</title>
        <authorList>
            <person name="Wittkopp N."/>
            <person name="Huntzinger E."/>
            <person name="Weiler C."/>
            <person name="Sauliere J."/>
            <person name="Schmidt S."/>
            <person name="Sonawane M."/>
            <person name="Izaurralde E."/>
        </authorList>
    </citation>
    <scope>NUCLEOTIDE SEQUENCE [MRNA]</scope>
    <scope>FUNCTION</scope>
    <scope>DEVELOPMENTAL STAGE</scope>
    <scope>DISRUPTION PHENOTYPE</scope>
</reference>
<reference evidence="8" key="2">
    <citation type="journal article" date="2013" name="Nature">
        <title>The zebrafish reference genome sequence and its relationship to the human genome.</title>
        <authorList>
            <person name="Howe K."/>
            <person name="Clark M.D."/>
            <person name="Torroja C.F."/>
            <person name="Torrance J."/>
            <person name="Berthelot C."/>
            <person name="Muffato M."/>
            <person name="Collins J.E."/>
            <person name="Humphray S."/>
            <person name="McLaren K."/>
            <person name="Matthews L."/>
            <person name="McLaren S."/>
            <person name="Sealy I."/>
            <person name="Caccamo M."/>
            <person name="Churcher C."/>
            <person name="Scott C."/>
            <person name="Barrett J.C."/>
            <person name="Koch R."/>
            <person name="Rauch G.J."/>
            <person name="White S."/>
            <person name="Chow W."/>
            <person name="Kilian B."/>
            <person name="Quintais L.T."/>
            <person name="Guerra-Assuncao J.A."/>
            <person name="Zhou Y."/>
            <person name="Gu Y."/>
            <person name="Yen J."/>
            <person name="Vogel J.H."/>
            <person name="Eyre T."/>
            <person name="Redmond S."/>
            <person name="Banerjee R."/>
            <person name="Chi J."/>
            <person name="Fu B."/>
            <person name="Langley E."/>
            <person name="Maguire S.F."/>
            <person name="Laird G.K."/>
            <person name="Lloyd D."/>
            <person name="Kenyon E."/>
            <person name="Donaldson S."/>
            <person name="Sehra H."/>
            <person name="Almeida-King J."/>
            <person name="Loveland J."/>
            <person name="Trevanion S."/>
            <person name="Jones M."/>
            <person name="Quail M."/>
            <person name="Willey D."/>
            <person name="Hunt A."/>
            <person name="Burton J."/>
            <person name="Sims S."/>
            <person name="McLay K."/>
            <person name="Plumb B."/>
            <person name="Davis J."/>
            <person name="Clee C."/>
            <person name="Oliver K."/>
            <person name="Clark R."/>
            <person name="Riddle C."/>
            <person name="Elliot D."/>
            <person name="Threadgold G."/>
            <person name="Harden G."/>
            <person name="Ware D."/>
            <person name="Begum S."/>
            <person name="Mortimore B."/>
            <person name="Kerry G."/>
            <person name="Heath P."/>
            <person name="Phillimore B."/>
            <person name="Tracey A."/>
            <person name="Corby N."/>
            <person name="Dunn M."/>
            <person name="Johnson C."/>
            <person name="Wood J."/>
            <person name="Clark S."/>
            <person name="Pelan S."/>
            <person name="Griffiths G."/>
            <person name="Smith M."/>
            <person name="Glithero R."/>
            <person name="Howden P."/>
            <person name="Barker N."/>
            <person name="Lloyd C."/>
            <person name="Stevens C."/>
            <person name="Harley J."/>
            <person name="Holt K."/>
            <person name="Panagiotidis G."/>
            <person name="Lovell J."/>
            <person name="Beasley H."/>
            <person name="Henderson C."/>
            <person name="Gordon D."/>
            <person name="Auger K."/>
            <person name="Wright D."/>
            <person name="Collins J."/>
            <person name="Raisen C."/>
            <person name="Dyer L."/>
            <person name="Leung K."/>
            <person name="Robertson L."/>
            <person name="Ambridge K."/>
            <person name="Leongamornlert D."/>
            <person name="McGuire S."/>
            <person name="Gilderthorp R."/>
            <person name="Griffiths C."/>
            <person name="Manthravadi D."/>
            <person name="Nichol S."/>
            <person name="Barker G."/>
            <person name="Whitehead S."/>
            <person name="Kay M."/>
            <person name="Brown J."/>
            <person name="Murnane C."/>
            <person name="Gray E."/>
            <person name="Humphries M."/>
            <person name="Sycamore N."/>
            <person name="Barker D."/>
            <person name="Saunders D."/>
            <person name="Wallis J."/>
            <person name="Babbage A."/>
            <person name="Hammond S."/>
            <person name="Mashreghi-Mohammadi M."/>
            <person name="Barr L."/>
            <person name="Martin S."/>
            <person name="Wray P."/>
            <person name="Ellington A."/>
            <person name="Matthews N."/>
            <person name="Ellwood M."/>
            <person name="Woodmansey R."/>
            <person name="Clark G."/>
            <person name="Cooper J."/>
            <person name="Tromans A."/>
            <person name="Grafham D."/>
            <person name="Skuce C."/>
            <person name="Pandian R."/>
            <person name="Andrews R."/>
            <person name="Harrison E."/>
            <person name="Kimberley A."/>
            <person name="Garnett J."/>
            <person name="Fosker N."/>
            <person name="Hall R."/>
            <person name="Garner P."/>
            <person name="Kelly D."/>
            <person name="Bird C."/>
            <person name="Palmer S."/>
            <person name="Gehring I."/>
            <person name="Berger A."/>
            <person name="Dooley C.M."/>
            <person name="Ersan-Urun Z."/>
            <person name="Eser C."/>
            <person name="Geiger H."/>
            <person name="Geisler M."/>
            <person name="Karotki L."/>
            <person name="Kirn A."/>
            <person name="Konantz J."/>
            <person name="Konantz M."/>
            <person name="Oberlander M."/>
            <person name="Rudolph-Geiger S."/>
            <person name="Teucke M."/>
            <person name="Lanz C."/>
            <person name="Raddatz G."/>
            <person name="Osoegawa K."/>
            <person name="Zhu B."/>
            <person name="Rapp A."/>
            <person name="Widaa S."/>
            <person name="Langford C."/>
            <person name="Yang F."/>
            <person name="Schuster S.C."/>
            <person name="Carter N.P."/>
            <person name="Harrow J."/>
            <person name="Ning Z."/>
            <person name="Herrero J."/>
            <person name="Searle S.M."/>
            <person name="Enright A."/>
            <person name="Geisler R."/>
            <person name="Plasterk R.H."/>
            <person name="Lee C."/>
            <person name="Westerfield M."/>
            <person name="de Jong P.J."/>
            <person name="Zon L.I."/>
            <person name="Postlethwait J.H."/>
            <person name="Nusslein-Volhard C."/>
            <person name="Hubbard T.J."/>
            <person name="Roest Crollius H."/>
            <person name="Rogers J."/>
            <person name="Stemple D.L."/>
        </authorList>
    </citation>
    <scope>NUCLEOTIDE SEQUENCE [LARGE SCALE GENOMIC DNA]</scope>
    <source>
        <strain evidence="8">Tuebingen</strain>
    </source>
</reference>
<reference evidence="6" key="3">
    <citation type="submission" date="2005-06" db="EMBL/GenBank/DDBJ databases">
        <authorList>
            <consortium name="NIH - Zebrafish Gene Collection (ZGC) project"/>
        </authorList>
    </citation>
    <scope>NUCLEOTIDE SEQUENCE [LARGE SCALE MRNA]</scope>
    <source>
        <tissue evidence="6">Olfactory epithelium</tissue>
    </source>
</reference>
<accession>F1R7R1</accession>
<accession>Q4V9C7</accession>